<evidence type="ECO:0000255" key="1">
    <source>
        <dbReference type="HAMAP-Rule" id="MF_01368"/>
    </source>
</evidence>
<evidence type="ECO:0000305" key="2"/>
<comment type="subunit">
    <text evidence="1">Part of the 50S ribosomal subunit. Contacts protein L32.</text>
</comment>
<comment type="similarity">
    <text evidence="1">Belongs to the bacterial ribosomal protein bL17 family.</text>
</comment>
<reference key="1">
    <citation type="journal article" date="2004" name="Nucleic Acids Res.">
        <title>Whole genome comparisons of serotype 4b and 1/2a strains of the food-borne pathogen Listeria monocytogenes reveal new insights into the core genome components of this species.</title>
        <authorList>
            <person name="Nelson K.E."/>
            <person name="Fouts D.E."/>
            <person name="Mongodin E.F."/>
            <person name="Ravel J."/>
            <person name="DeBoy R.T."/>
            <person name="Kolonay J.F."/>
            <person name="Rasko D.A."/>
            <person name="Angiuoli S.V."/>
            <person name="Gill S.R."/>
            <person name="Paulsen I.T."/>
            <person name="Peterson J.D."/>
            <person name="White O."/>
            <person name="Nelson W.C."/>
            <person name="Nierman W.C."/>
            <person name="Beanan M.J."/>
            <person name="Brinkac L.M."/>
            <person name="Daugherty S.C."/>
            <person name="Dodson R.J."/>
            <person name="Durkin A.S."/>
            <person name="Madupu R."/>
            <person name="Haft D.H."/>
            <person name="Selengut J."/>
            <person name="Van Aken S.E."/>
            <person name="Khouri H.M."/>
            <person name="Fedorova N."/>
            <person name="Forberger H.A."/>
            <person name="Tran B."/>
            <person name="Kathariou S."/>
            <person name="Wonderling L.D."/>
            <person name="Uhlich G.A."/>
            <person name="Bayles D.O."/>
            <person name="Luchansky J.B."/>
            <person name="Fraser C.M."/>
        </authorList>
    </citation>
    <scope>NUCLEOTIDE SEQUENCE [LARGE SCALE GENOMIC DNA]</scope>
    <source>
        <strain>F2365</strain>
    </source>
</reference>
<feature type="chain" id="PRO_1000055864" description="Large ribosomal subunit protein bL17">
    <location>
        <begin position="1"/>
        <end position="135"/>
    </location>
</feature>
<sequence length="135" mass="15215">MGYRKLGRTSSQRKALLRDLATDLIVFERIETTEARAKEIRKVVEKLITSGKKGDLHARRQAAAFIRHEVVEVVQVDAKGKDGSTVKKNRPVYALQKLFDDVAPRYAERQGGYTRILKKGPRRGDGAPMVIIELV</sequence>
<keyword id="KW-0687">Ribonucleoprotein</keyword>
<keyword id="KW-0689">Ribosomal protein</keyword>
<protein>
    <recommendedName>
        <fullName evidence="1">Large ribosomal subunit protein bL17</fullName>
    </recommendedName>
    <alternativeName>
        <fullName evidence="2">50S ribosomal protein L17</fullName>
    </alternativeName>
</protein>
<name>RL17_LISMF</name>
<proteinExistence type="inferred from homology"/>
<organism>
    <name type="scientific">Listeria monocytogenes serotype 4b (strain F2365)</name>
    <dbReference type="NCBI Taxonomy" id="265669"/>
    <lineage>
        <taxon>Bacteria</taxon>
        <taxon>Bacillati</taxon>
        <taxon>Bacillota</taxon>
        <taxon>Bacilli</taxon>
        <taxon>Bacillales</taxon>
        <taxon>Listeriaceae</taxon>
        <taxon>Listeria</taxon>
    </lineage>
</organism>
<gene>
    <name evidence="1" type="primary">rplQ</name>
    <name type="ordered locus">LMOf2365_2578</name>
</gene>
<accession>Q71WH3</accession>
<dbReference type="EMBL" id="AE017262">
    <property type="protein sequence ID" value="AAT05343.1"/>
    <property type="molecule type" value="Genomic_DNA"/>
</dbReference>
<dbReference type="RefSeq" id="WP_003723675.1">
    <property type="nucleotide sequence ID" value="NC_002973.6"/>
</dbReference>
<dbReference type="SMR" id="Q71WH3"/>
<dbReference type="GeneID" id="93240486"/>
<dbReference type="KEGG" id="lmf:LMOf2365_2578"/>
<dbReference type="HOGENOM" id="CLU_074407_2_2_9"/>
<dbReference type="GO" id="GO:0022625">
    <property type="term" value="C:cytosolic large ribosomal subunit"/>
    <property type="evidence" value="ECO:0007669"/>
    <property type="project" value="TreeGrafter"/>
</dbReference>
<dbReference type="GO" id="GO:0003735">
    <property type="term" value="F:structural constituent of ribosome"/>
    <property type="evidence" value="ECO:0007669"/>
    <property type="project" value="InterPro"/>
</dbReference>
<dbReference type="GO" id="GO:0006412">
    <property type="term" value="P:translation"/>
    <property type="evidence" value="ECO:0007669"/>
    <property type="project" value="UniProtKB-UniRule"/>
</dbReference>
<dbReference type="FunFam" id="3.90.1030.10:FF:000002">
    <property type="entry name" value="50S ribosomal protein L17"/>
    <property type="match status" value="1"/>
</dbReference>
<dbReference type="Gene3D" id="3.90.1030.10">
    <property type="entry name" value="Ribosomal protein L17"/>
    <property type="match status" value="1"/>
</dbReference>
<dbReference type="HAMAP" id="MF_01368">
    <property type="entry name" value="Ribosomal_bL17"/>
    <property type="match status" value="1"/>
</dbReference>
<dbReference type="InterPro" id="IPR000456">
    <property type="entry name" value="Ribosomal_bL17"/>
</dbReference>
<dbReference type="InterPro" id="IPR047859">
    <property type="entry name" value="Ribosomal_bL17_CS"/>
</dbReference>
<dbReference type="InterPro" id="IPR036373">
    <property type="entry name" value="Ribosomal_bL17_sf"/>
</dbReference>
<dbReference type="NCBIfam" id="TIGR00059">
    <property type="entry name" value="L17"/>
    <property type="match status" value="1"/>
</dbReference>
<dbReference type="PANTHER" id="PTHR14413:SF16">
    <property type="entry name" value="LARGE RIBOSOMAL SUBUNIT PROTEIN BL17M"/>
    <property type="match status" value="1"/>
</dbReference>
<dbReference type="PANTHER" id="PTHR14413">
    <property type="entry name" value="RIBOSOMAL PROTEIN L17"/>
    <property type="match status" value="1"/>
</dbReference>
<dbReference type="Pfam" id="PF01196">
    <property type="entry name" value="Ribosomal_L17"/>
    <property type="match status" value="1"/>
</dbReference>
<dbReference type="SUPFAM" id="SSF64263">
    <property type="entry name" value="Prokaryotic ribosomal protein L17"/>
    <property type="match status" value="1"/>
</dbReference>
<dbReference type="PROSITE" id="PS01167">
    <property type="entry name" value="RIBOSOMAL_L17"/>
    <property type="match status" value="1"/>
</dbReference>